<reference key="1">
    <citation type="journal article" date="2004" name="Genome Res.">
        <title>Genome sequence of Haloarcula marismortui: a halophilic archaeon from the Dead Sea.</title>
        <authorList>
            <person name="Baliga N.S."/>
            <person name="Bonneau R."/>
            <person name="Facciotti M.T."/>
            <person name="Pan M."/>
            <person name="Glusman G."/>
            <person name="Deutsch E.W."/>
            <person name="Shannon P."/>
            <person name="Chiu Y."/>
            <person name="Weng R.S."/>
            <person name="Gan R.R."/>
            <person name="Hung P."/>
            <person name="Date S.V."/>
            <person name="Marcotte E."/>
            <person name="Hood L."/>
            <person name="Ng W.V."/>
        </authorList>
    </citation>
    <scope>NUCLEOTIDE SEQUENCE [LARGE SCALE GENOMIC DNA]</scope>
    <source>
        <strain>ATCC 43049 / DSM 3752 / JCM 8966 / VKM B-1809</strain>
    </source>
</reference>
<sequence length="801" mass="86473">MSTEPTIHDSIDTAATTVGSLWPIHSFVTANPLAGFEDQPFSEAVTQAADLLGGRGYPSTRTFRAALQRGQIDPEILDAELSEAGYEKEPEILLDRMAEATDAADSDSDTATDHVDQVLTKWLSAFLDEGSAHWSMPNREAGFYAAFRGVAEHDSEIPDAGIIAELPESPIETIETVLASHPENQWVPIFEEQLAALPGWTGLIKQRADDEGAWQSTYPISLVGYLAARLALLDAVGAALAPSNDSIDPDPAAELAGAFLRAWEASYRGDLVETVAAESQSLADSDSSGRPDAQMVFCIDTRSEIIRRHIEATGDYETHGYAGFFGIPMEYQGYDTDVSVDACPPILDPQHHVTDVPIDDDTQESHDRWSGIRDTADEIIETLEANAATAYGFVETAGSGYGLALAARTLVPGRVQDLFDAAGRSVPDDHEFCDPLVHHQHTYTGDLPVGLTTDEKVEYAATAFDLMGWEAFSRLVVFTGHASETTNNPYDSSLDCGACAGNPGGPNARVLATICNDTEVQSALRDRGFEIPEDTVFMAGEHNTTTDEVELYDSEVPESHADDLKQLRANLATARENAAAERAESMGSDASSGVSETQRRAADWAETRPEWGLAGNAGFVIGPRELTSDVDLDGRAFLHSYDWSTDPDGEALEAILTGPMVVTQWINTQYYFSTVDNAVYGSGSKVTHNPVGNVGVYQGNGGDLMTGLPLQSLMAADDDPHHQPLRLSTVIHAPVDRVTDVLADHAELATLLDNNWLSLTVVDPTQDHHAFEYERDLEWSTVSEVSEADPAEPTATAVADD</sequence>
<accession>Q5V6U6</accession>
<protein>
    <recommendedName>
        <fullName evidence="1">Probable inorganic carbon transporter subunit DabA</fullName>
    </recommendedName>
</protein>
<keyword id="KW-1003">Cell membrane</keyword>
<keyword id="KW-0472">Membrane</keyword>
<keyword id="KW-0479">Metal-binding</keyword>
<keyword id="KW-0614">Plasmid</keyword>
<keyword id="KW-1185">Reference proteome</keyword>
<keyword id="KW-0813">Transport</keyword>
<keyword id="KW-0862">Zinc</keyword>
<comment type="function">
    <text evidence="1">Part of an energy-coupled inorganic carbon pump.</text>
</comment>
<comment type="cofactor">
    <cofactor evidence="1">
        <name>Zn(2+)</name>
        <dbReference type="ChEBI" id="CHEBI:29105"/>
    </cofactor>
</comment>
<comment type="subunit">
    <text evidence="1">Forms a complex with DabB.</text>
</comment>
<comment type="subcellular location">
    <subcellularLocation>
        <location evidence="1">Cell membrane</location>
        <topology evidence="1">Peripheral membrane protein</topology>
    </subcellularLocation>
</comment>
<comment type="similarity">
    <text evidence="1">Belongs to the inorganic carbon transporter (TC 9.A.2) DabA family.</text>
</comment>
<dbReference type="EMBL" id="AY596296">
    <property type="protein sequence ID" value="AAV44756.1"/>
    <property type="molecule type" value="Genomic_DNA"/>
</dbReference>
<dbReference type="RefSeq" id="WP_011222529.1">
    <property type="nucleotide sequence ID" value="NC_006395.1"/>
</dbReference>
<dbReference type="EnsemblBacteria" id="AAV44756">
    <property type="protein sequence ID" value="AAV44756"/>
    <property type="gene ID" value="pNG7034"/>
</dbReference>
<dbReference type="GeneID" id="40151317"/>
<dbReference type="KEGG" id="hma:pNG7034"/>
<dbReference type="PATRIC" id="fig|272569.17.peg.490"/>
<dbReference type="HOGENOM" id="CLU_009885_0_0_2"/>
<dbReference type="Proteomes" id="UP000001169">
    <property type="component" value="Plasmid pNG700"/>
</dbReference>
<dbReference type="GO" id="GO:0005886">
    <property type="term" value="C:plasma membrane"/>
    <property type="evidence" value="ECO:0007669"/>
    <property type="project" value="UniProtKB-SubCell"/>
</dbReference>
<dbReference type="GO" id="GO:0008270">
    <property type="term" value="F:zinc ion binding"/>
    <property type="evidence" value="ECO:0007669"/>
    <property type="project" value="UniProtKB-UniRule"/>
</dbReference>
<dbReference type="HAMAP" id="MF_01871">
    <property type="entry name" value="DabA"/>
    <property type="match status" value="1"/>
</dbReference>
<dbReference type="InterPro" id="IPR018752">
    <property type="entry name" value="DabA"/>
</dbReference>
<dbReference type="PANTHER" id="PTHR38344:SF1">
    <property type="entry name" value="INORGANIC CARBON TRANSPORTER SUBUNIT DABA-RELATED"/>
    <property type="match status" value="1"/>
</dbReference>
<dbReference type="PANTHER" id="PTHR38344">
    <property type="entry name" value="UPF0753 PROTEIN AQ_863"/>
    <property type="match status" value="1"/>
</dbReference>
<dbReference type="Pfam" id="PF10070">
    <property type="entry name" value="DabA"/>
    <property type="match status" value="1"/>
</dbReference>
<feature type="chain" id="PRO_0000387330" description="Probable inorganic carbon transporter subunit DabA">
    <location>
        <begin position="1"/>
        <end position="801"/>
    </location>
</feature>
<feature type="region of interest" description="Disordered" evidence="2">
    <location>
        <begin position="575"/>
        <end position="596"/>
    </location>
</feature>
<feature type="binding site" evidence="1">
    <location>
        <position position="298"/>
    </location>
    <ligand>
        <name>Zn(2+)</name>
        <dbReference type="ChEBI" id="CHEBI:29105"/>
    </ligand>
</feature>
<feature type="binding site" evidence="1">
    <location>
        <position position="300"/>
    </location>
    <ligand>
        <name>Zn(2+)</name>
        <dbReference type="ChEBI" id="CHEBI:29105"/>
    </ligand>
</feature>
<feature type="binding site" evidence="1">
    <location>
        <position position="481"/>
    </location>
    <ligand>
        <name>Zn(2+)</name>
        <dbReference type="ChEBI" id="CHEBI:29105"/>
    </ligand>
</feature>
<feature type="binding site" evidence="1">
    <location>
        <position position="496"/>
    </location>
    <ligand>
        <name>Zn(2+)</name>
        <dbReference type="ChEBI" id="CHEBI:29105"/>
    </ligand>
</feature>
<organism>
    <name type="scientific">Haloarcula marismortui (strain ATCC 43049 / DSM 3752 / JCM 8966 / VKM B-1809)</name>
    <name type="common">Halobacterium marismortui</name>
    <dbReference type="NCBI Taxonomy" id="272569"/>
    <lineage>
        <taxon>Archaea</taxon>
        <taxon>Methanobacteriati</taxon>
        <taxon>Methanobacteriota</taxon>
        <taxon>Stenosarchaea group</taxon>
        <taxon>Halobacteria</taxon>
        <taxon>Halobacteriales</taxon>
        <taxon>Haloarculaceae</taxon>
        <taxon>Haloarcula</taxon>
    </lineage>
</organism>
<geneLocation type="plasmid">
    <name>pNG700</name>
</geneLocation>
<evidence type="ECO:0000255" key="1">
    <source>
        <dbReference type="HAMAP-Rule" id="MF_01871"/>
    </source>
</evidence>
<evidence type="ECO:0000256" key="2">
    <source>
        <dbReference type="SAM" id="MobiDB-lite"/>
    </source>
</evidence>
<name>DABA_HALMA</name>
<proteinExistence type="inferred from homology"/>
<gene>
    <name evidence="1" type="primary">dabA</name>
    <name type="ordered locus">pNG7034</name>
</gene>